<reference key="1">
    <citation type="journal article" date="2005" name="J. Bacteriol.">
        <title>Swine and poultry pathogens: the complete genome sequences of two strains of Mycoplasma hyopneumoniae and a strain of Mycoplasma synoviae.</title>
        <authorList>
            <person name="Vasconcelos A.T.R."/>
            <person name="Ferreira H.B."/>
            <person name="Bizarro C.V."/>
            <person name="Bonatto S.L."/>
            <person name="Carvalho M.O."/>
            <person name="Pinto P.M."/>
            <person name="Almeida D.F."/>
            <person name="Almeida L.G.P."/>
            <person name="Almeida R."/>
            <person name="Alves-Junior L."/>
            <person name="Assuncao E.N."/>
            <person name="Azevedo V.A.C."/>
            <person name="Bogo M.R."/>
            <person name="Brigido M.M."/>
            <person name="Brocchi M."/>
            <person name="Burity H.A."/>
            <person name="Camargo A.A."/>
            <person name="Camargo S.S."/>
            <person name="Carepo M.S."/>
            <person name="Carraro D.M."/>
            <person name="de Mattos Cascardo J.C."/>
            <person name="Castro L.A."/>
            <person name="Cavalcanti G."/>
            <person name="Chemale G."/>
            <person name="Collevatti R.G."/>
            <person name="Cunha C.W."/>
            <person name="Dallagiovanna B."/>
            <person name="Dambros B.P."/>
            <person name="Dellagostin O.A."/>
            <person name="Falcao C."/>
            <person name="Fantinatti-Garboggini F."/>
            <person name="Felipe M.S.S."/>
            <person name="Fiorentin L."/>
            <person name="Franco G.R."/>
            <person name="Freitas N.S.A."/>
            <person name="Frias D."/>
            <person name="Grangeiro T.B."/>
            <person name="Grisard E.C."/>
            <person name="Guimaraes C.T."/>
            <person name="Hungria M."/>
            <person name="Jardim S.N."/>
            <person name="Krieger M.A."/>
            <person name="Laurino J.P."/>
            <person name="Lima L.F.A."/>
            <person name="Lopes M.I."/>
            <person name="Loreto E.L.S."/>
            <person name="Madeira H.M.F."/>
            <person name="Manfio G.P."/>
            <person name="Maranhao A.Q."/>
            <person name="Martinkovics C.T."/>
            <person name="Medeiros S.R.B."/>
            <person name="Moreira M.A.M."/>
            <person name="Neiva M."/>
            <person name="Ramalho-Neto C.E."/>
            <person name="Nicolas M.F."/>
            <person name="Oliveira S.C."/>
            <person name="Paixao R.F.C."/>
            <person name="Pedrosa F.O."/>
            <person name="Pena S.D.J."/>
            <person name="Pereira M."/>
            <person name="Pereira-Ferrari L."/>
            <person name="Piffer I."/>
            <person name="Pinto L.S."/>
            <person name="Potrich D.P."/>
            <person name="Salim A.C.M."/>
            <person name="Santos F.R."/>
            <person name="Schmitt R."/>
            <person name="Schneider M.P.C."/>
            <person name="Schrank A."/>
            <person name="Schrank I.S."/>
            <person name="Schuck A.F."/>
            <person name="Seuanez H.N."/>
            <person name="Silva D.W."/>
            <person name="Silva R."/>
            <person name="Silva S.C."/>
            <person name="Soares C.M.A."/>
            <person name="Souza K.R.L."/>
            <person name="Souza R.C."/>
            <person name="Staats C.C."/>
            <person name="Steffens M.B.R."/>
            <person name="Teixeira S.M.R."/>
            <person name="Urmenyi T.P."/>
            <person name="Vainstein M.H."/>
            <person name="Zuccherato L.W."/>
            <person name="Simpson A.J.G."/>
            <person name="Zaha A."/>
        </authorList>
    </citation>
    <scope>NUCLEOTIDE SEQUENCE [LARGE SCALE GENOMIC DNA]</scope>
    <source>
        <strain>7448</strain>
    </source>
</reference>
<protein>
    <recommendedName>
        <fullName evidence="1">Energy-coupling factor transporter ATP-binding protein EcfA2</fullName>
        <shortName evidence="1">ECF transporter A component EcfA2</shortName>
        <ecNumber evidence="1">7.-.-.-</ecNumber>
    </recommendedName>
</protein>
<gene>
    <name evidence="1" type="primary">ecfA2</name>
    <name type="synonym">cbiO2</name>
    <name type="ordered locus">MHP7448_0264</name>
</gene>
<comment type="function">
    <text evidence="1">ATP-binding (A) component of a common energy-coupling factor (ECF) ABC-transporter complex. Unlike classic ABC transporters this ECF transporter provides the energy necessary to transport a number of different substrates.</text>
</comment>
<comment type="subunit">
    <text evidence="1">Forms a stable energy-coupling factor (ECF) transporter complex composed of 2 membrane-embedded substrate-binding proteins (S component), 2 ATP-binding proteins (A component) and 2 transmembrane proteins (T component).</text>
</comment>
<comment type="subcellular location">
    <subcellularLocation>
        <location evidence="1">Cell membrane</location>
        <topology evidence="1">Peripheral membrane protein</topology>
    </subcellularLocation>
</comment>
<comment type="similarity">
    <text evidence="1">Belongs to the ABC transporter superfamily. Energy-coupling factor EcfA family.</text>
</comment>
<keyword id="KW-0067">ATP-binding</keyword>
<keyword id="KW-1003">Cell membrane</keyword>
<keyword id="KW-0472">Membrane</keyword>
<keyword id="KW-0547">Nucleotide-binding</keyword>
<keyword id="KW-1278">Translocase</keyword>
<keyword id="KW-0813">Transport</keyword>
<name>ECFA2_MESH7</name>
<sequence>MKIKAKNIVKIYDQKLPSELKALDKVTTEINQGEFIAIIGQTGSGKTTFIQHMNALLLPDQGEVEYLYFDSKNQEKKLVVQKPRFFRKKLKFINEIRRRVGVVFQFAEYQLFEQTIEKDIIFGAVSMGTPKNEAKKIAAEIIELVGLDQSFLQKSPFELSGGQKRRVAIAGILAMDPDIIFFDEPTAGLDPQGTLKMLEILDTLYKKGKTIILATHDLDSVLEWTKRCIFFKDGRIIYDGDTYSILANNKFLIENKMLPTNLLNFREKLIKIGYPISNVRSVSELISEINMLIQKETNAD</sequence>
<proteinExistence type="inferred from homology"/>
<dbReference type="EC" id="7.-.-.-" evidence="1"/>
<dbReference type="EMBL" id="AE017244">
    <property type="protein sequence ID" value="AAZ53638.1"/>
    <property type="molecule type" value="Genomic_DNA"/>
</dbReference>
<dbReference type="RefSeq" id="WP_011290118.1">
    <property type="nucleotide sequence ID" value="NC_007332.1"/>
</dbReference>
<dbReference type="SMR" id="Q4A8A1"/>
<dbReference type="KEGG" id="mhp:MHP7448_0264"/>
<dbReference type="HOGENOM" id="CLU_000604_1_22_14"/>
<dbReference type="Proteomes" id="UP000000553">
    <property type="component" value="Chromosome"/>
</dbReference>
<dbReference type="GO" id="GO:0043190">
    <property type="term" value="C:ATP-binding cassette (ABC) transporter complex"/>
    <property type="evidence" value="ECO:0007669"/>
    <property type="project" value="TreeGrafter"/>
</dbReference>
<dbReference type="GO" id="GO:0005524">
    <property type="term" value="F:ATP binding"/>
    <property type="evidence" value="ECO:0007669"/>
    <property type="project" value="UniProtKB-KW"/>
</dbReference>
<dbReference type="GO" id="GO:0016887">
    <property type="term" value="F:ATP hydrolysis activity"/>
    <property type="evidence" value="ECO:0007669"/>
    <property type="project" value="InterPro"/>
</dbReference>
<dbReference type="GO" id="GO:0042626">
    <property type="term" value="F:ATPase-coupled transmembrane transporter activity"/>
    <property type="evidence" value="ECO:0007669"/>
    <property type="project" value="TreeGrafter"/>
</dbReference>
<dbReference type="CDD" id="cd03225">
    <property type="entry name" value="ABC_cobalt_CbiO_domain1"/>
    <property type="match status" value="1"/>
</dbReference>
<dbReference type="FunFam" id="3.40.50.300:FF:000224">
    <property type="entry name" value="Energy-coupling factor transporter ATP-binding protein EcfA"/>
    <property type="match status" value="1"/>
</dbReference>
<dbReference type="Gene3D" id="3.40.50.300">
    <property type="entry name" value="P-loop containing nucleotide triphosphate hydrolases"/>
    <property type="match status" value="1"/>
</dbReference>
<dbReference type="InterPro" id="IPR003593">
    <property type="entry name" value="AAA+_ATPase"/>
</dbReference>
<dbReference type="InterPro" id="IPR003439">
    <property type="entry name" value="ABC_transporter-like_ATP-bd"/>
</dbReference>
<dbReference type="InterPro" id="IPR017871">
    <property type="entry name" value="ABC_transporter-like_CS"/>
</dbReference>
<dbReference type="InterPro" id="IPR015856">
    <property type="entry name" value="ABC_transpr_CbiO/EcfA_su"/>
</dbReference>
<dbReference type="InterPro" id="IPR050095">
    <property type="entry name" value="ECF_ABC_transporter_ATP-bd"/>
</dbReference>
<dbReference type="InterPro" id="IPR027417">
    <property type="entry name" value="P-loop_NTPase"/>
</dbReference>
<dbReference type="NCBIfam" id="NF010170">
    <property type="entry name" value="PRK13651.1"/>
    <property type="match status" value="1"/>
</dbReference>
<dbReference type="PANTHER" id="PTHR43553:SF27">
    <property type="entry name" value="ENERGY-COUPLING FACTOR TRANSPORTER ATP-BINDING PROTEIN ECFA2"/>
    <property type="match status" value="1"/>
</dbReference>
<dbReference type="PANTHER" id="PTHR43553">
    <property type="entry name" value="HEAVY METAL TRANSPORTER"/>
    <property type="match status" value="1"/>
</dbReference>
<dbReference type="Pfam" id="PF00005">
    <property type="entry name" value="ABC_tran"/>
    <property type="match status" value="1"/>
</dbReference>
<dbReference type="SMART" id="SM00382">
    <property type="entry name" value="AAA"/>
    <property type="match status" value="1"/>
</dbReference>
<dbReference type="SUPFAM" id="SSF52540">
    <property type="entry name" value="P-loop containing nucleoside triphosphate hydrolases"/>
    <property type="match status" value="1"/>
</dbReference>
<dbReference type="PROSITE" id="PS00211">
    <property type="entry name" value="ABC_TRANSPORTER_1"/>
    <property type="match status" value="1"/>
</dbReference>
<dbReference type="PROSITE" id="PS50893">
    <property type="entry name" value="ABC_TRANSPORTER_2"/>
    <property type="match status" value="1"/>
</dbReference>
<dbReference type="PROSITE" id="PS51246">
    <property type="entry name" value="CBIO"/>
    <property type="match status" value="1"/>
</dbReference>
<evidence type="ECO:0000255" key="1">
    <source>
        <dbReference type="HAMAP-Rule" id="MF_01710"/>
    </source>
</evidence>
<accession>Q4A8A1</accession>
<organism>
    <name type="scientific">Mesomycoplasma hyopneumoniae (strain 7448)</name>
    <name type="common">Mycoplasma hyopneumoniae</name>
    <dbReference type="NCBI Taxonomy" id="262722"/>
    <lineage>
        <taxon>Bacteria</taxon>
        <taxon>Bacillati</taxon>
        <taxon>Mycoplasmatota</taxon>
        <taxon>Mycoplasmoidales</taxon>
        <taxon>Metamycoplasmataceae</taxon>
        <taxon>Mesomycoplasma</taxon>
    </lineage>
</organism>
<feature type="chain" id="PRO_0000287971" description="Energy-coupling factor transporter ATP-binding protein EcfA2">
    <location>
        <begin position="1"/>
        <end position="300"/>
    </location>
</feature>
<feature type="domain" description="ABC transporter" evidence="1">
    <location>
        <begin position="3"/>
        <end position="258"/>
    </location>
</feature>
<feature type="binding site" evidence="1">
    <location>
        <begin position="40"/>
        <end position="47"/>
    </location>
    <ligand>
        <name>ATP</name>
        <dbReference type="ChEBI" id="CHEBI:30616"/>
    </ligand>
</feature>